<name>YDH2_XANAU</name>
<feature type="chain" id="PRO_0000066193" description="Uncharacterized protein in dhlA 3'region">
    <location>
        <begin position="1"/>
        <end position="295" status="greater than"/>
    </location>
</feature>
<feature type="non-terminal residue">
    <location>
        <position position="295"/>
    </location>
</feature>
<protein>
    <recommendedName>
        <fullName>Uncharacterized protein in dhlA 3'region</fullName>
    </recommendedName>
</protein>
<reference key="1">
    <citation type="journal article" date="1989" name="J. Bacteriol.">
        <title>Cloning of 1,2-dichloroethane degradation genes of Xanthobacter autotrophicus GJ10 and expression and sequencing of the dhlA gene.</title>
        <authorList>
            <person name="Janssen D.B."/>
            <person name="Pries F."/>
            <person name="van der Ploeg J."/>
            <person name="Kazemier B."/>
            <person name="Terpstra P."/>
            <person name="Witholt B."/>
        </authorList>
    </citation>
    <scope>NUCLEOTIDE SEQUENCE [GENOMIC DNA]</scope>
    <source>
        <strain>GJ10</strain>
    </source>
</reference>
<proteinExistence type="predicted"/>
<dbReference type="EMBL" id="M26950">
    <property type="protein sequence ID" value="AAA88692.1"/>
    <property type="molecule type" value="Genomic_DNA"/>
</dbReference>
<dbReference type="PIR" id="C43718">
    <property type="entry name" value="C43718"/>
</dbReference>
<dbReference type="GO" id="GO:0003677">
    <property type="term" value="F:DNA binding"/>
    <property type="evidence" value="ECO:0007669"/>
    <property type="project" value="InterPro"/>
</dbReference>
<dbReference type="GO" id="GO:0004803">
    <property type="term" value="F:transposase activity"/>
    <property type="evidence" value="ECO:0007669"/>
    <property type="project" value="InterPro"/>
</dbReference>
<dbReference type="GO" id="GO:0006313">
    <property type="term" value="P:DNA transposition"/>
    <property type="evidence" value="ECO:0007669"/>
    <property type="project" value="InterPro"/>
</dbReference>
<dbReference type="InterPro" id="IPR047647">
    <property type="entry name" value="ISAs1_transpos"/>
</dbReference>
<dbReference type="InterPro" id="IPR002559">
    <property type="entry name" value="Transposase_11"/>
</dbReference>
<dbReference type="InterPro" id="IPR051698">
    <property type="entry name" value="Transposase_11-like"/>
</dbReference>
<dbReference type="InterPro" id="IPR032806">
    <property type="entry name" value="YbfD_N"/>
</dbReference>
<dbReference type="NCBIfam" id="NF033564">
    <property type="entry name" value="transpos_ISAs1"/>
    <property type="match status" value="1"/>
</dbReference>
<dbReference type="PANTHER" id="PTHR30298">
    <property type="entry name" value="H REPEAT-ASSOCIATED PREDICTED TRANSPOSASE"/>
    <property type="match status" value="1"/>
</dbReference>
<dbReference type="PANTHER" id="PTHR30298:SF0">
    <property type="entry name" value="PROTEIN YBFL-RELATED"/>
    <property type="match status" value="1"/>
</dbReference>
<dbReference type="Pfam" id="PF01609">
    <property type="entry name" value="DDE_Tnp_1"/>
    <property type="match status" value="1"/>
</dbReference>
<dbReference type="Pfam" id="PF13808">
    <property type="entry name" value="DDE_Tnp_1_assoc"/>
    <property type="match status" value="1"/>
</dbReference>
<organism>
    <name type="scientific">Xanthobacter autotrophicus</name>
    <dbReference type="NCBI Taxonomy" id="280"/>
    <lineage>
        <taxon>Bacteria</taxon>
        <taxon>Pseudomonadati</taxon>
        <taxon>Pseudomonadota</taxon>
        <taxon>Alphaproteobacteria</taxon>
        <taxon>Hyphomicrobiales</taxon>
        <taxon>Xanthobacteraceae</taxon>
        <taxon>Xanthobacter</taxon>
    </lineage>
</organism>
<accession>P22644</accession>
<sequence length="295" mass="32797">MSVFAGAAAMLPNPKPFFELIPDPRRATPNKLHSLSDILSIALCAVLSGMDDWEAVAEFGRTKEGWLRQFLPLANGIPSHDTFGRVFSLIDPEAFEAAFFDWAAHARIGGDVLDQLALDGKTVRRSHRGSAGRALHLLHAWSCETRLLVAQRRVDTKSNEITAIPDILSLFDLRGVTISIDAIGCQKAVARQITEAGGDYVLALKGNQSALHDDVRLFMETQADRHPQGQAEAVEKDHGRIETRRIWVNDEIDWLTQKPDWPGLKTLVMVESRRELNGQVSCERRCFITSHTADP</sequence>